<proteinExistence type="inferred from homology"/>
<accession>A1AG75</accession>
<organism>
    <name type="scientific">Escherichia coli O1:K1 / APEC</name>
    <dbReference type="NCBI Taxonomy" id="405955"/>
    <lineage>
        <taxon>Bacteria</taxon>
        <taxon>Pseudomonadati</taxon>
        <taxon>Pseudomonadota</taxon>
        <taxon>Gammaproteobacteria</taxon>
        <taxon>Enterobacterales</taxon>
        <taxon>Enterobacteriaceae</taxon>
        <taxon>Escherichia</taxon>
    </lineage>
</organism>
<dbReference type="EMBL" id="CP000468">
    <property type="protein sequence ID" value="ABJ02665.1"/>
    <property type="molecule type" value="Genomic_DNA"/>
</dbReference>
<dbReference type="SMR" id="A1AG75"/>
<dbReference type="KEGG" id="ecv:APECO1_3260"/>
<dbReference type="HOGENOM" id="CLU_070525_1_1_6"/>
<dbReference type="Proteomes" id="UP000008216">
    <property type="component" value="Chromosome"/>
</dbReference>
<dbReference type="GO" id="GO:0005829">
    <property type="term" value="C:cytosol"/>
    <property type="evidence" value="ECO:0007669"/>
    <property type="project" value="TreeGrafter"/>
</dbReference>
<dbReference type="GO" id="GO:0000028">
    <property type="term" value="P:ribosomal small subunit assembly"/>
    <property type="evidence" value="ECO:0007669"/>
    <property type="project" value="TreeGrafter"/>
</dbReference>
<dbReference type="GO" id="GO:0006412">
    <property type="term" value="P:translation"/>
    <property type="evidence" value="ECO:0007669"/>
    <property type="project" value="TreeGrafter"/>
</dbReference>
<dbReference type="CDD" id="cd01734">
    <property type="entry name" value="YlxS_C"/>
    <property type="match status" value="1"/>
</dbReference>
<dbReference type="FunFam" id="2.30.30.180:FF:000001">
    <property type="entry name" value="Ribosome maturation factor RimP"/>
    <property type="match status" value="1"/>
</dbReference>
<dbReference type="FunFam" id="3.30.300.70:FF:000001">
    <property type="entry name" value="Ribosome maturation factor RimP"/>
    <property type="match status" value="1"/>
</dbReference>
<dbReference type="Gene3D" id="2.30.30.180">
    <property type="entry name" value="Ribosome maturation factor RimP, C-terminal domain"/>
    <property type="match status" value="1"/>
</dbReference>
<dbReference type="Gene3D" id="3.30.300.70">
    <property type="entry name" value="RimP-like superfamily, N-terminal"/>
    <property type="match status" value="1"/>
</dbReference>
<dbReference type="HAMAP" id="MF_01077">
    <property type="entry name" value="RimP"/>
    <property type="match status" value="1"/>
</dbReference>
<dbReference type="InterPro" id="IPR003728">
    <property type="entry name" value="Ribosome_maturation_RimP"/>
</dbReference>
<dbReference type="InterPro" id="IPR028998">
    <property type="entry name" value="RimP_C"/>
</dbReference>
<dbReference type="InterPro" id="IPR036847">
    <property type="entry name" value="RimP_C_sf"/>
</dbReference>
<dbReference type="InterPro" id="IPR028989">
    <property type="entry name" value="RimP_N"/>
</dbReference>
<dbReference type="InterPro" id="IPR035956">
    <property type="entry name" value="RimP_N_sf"/>
</dbReference>
<dbReference type="NCBIfam" id="NF000927">
    <property type="entry name" value="PRK00092.1-1"/>
    <property type="match status" value="1"/>
</dbReference>
<dbReference type="PANTHER" id="PTHR33867">
    <property type="entry name" value="RIBOSOME MATURATION FACTOR RIMP"/>
    <property type="match status" value="1"/>
</dbReference>
<dbReference type="PANTHER" id="PTHR33867:SF1">
    <property type="entry name" value="RIBOSOME MATURATION FACTOR RIMP"/>
    <property type="match status" value="1"/>
</dbReference>
<dbReference type="Pfam" id="PF17384">
    <property type="entry name" value="DUF150_C"/>
    <property type="match status" value="1"/>
</dbReference>
<dbReference type="Pfam" id="PF02576">
    <property type="entry name" value="RimP_N"/>
    <property type="match status" value="1"/>
</dbReference>
<dbReference type="SUPFAM" id="SSF74942">
    <property type="entry name" value="YhbC-like, C-terminal domain"/>
    <property type="match status" value="1"/>
</dbReference>
<dbReference type="SUPFAM" id="SSF75420">
    <property type="entry name" value="YhbC-like, N-terminal domain"/>
    <property type="match status" value="1"/>
</dbReference>
<comment type="function">
    <text evidence="1">Required for maturation of 30S ribosomal subunits.</text>
</comment>
<comment type="subcellular location">
    <subcellularLocation>
        <location evidence="1">Cytoplasm</location>
    </subcellularLocation>
</comment>
<comment type="similarity">
    <text evidence="1">Belongs to the RimP family.</text>
</comment>
<gene>
    <name evidence="1" type="primary">rimP</name>
    <name type="ordered locus">Ecok1_31710</name>
    <name type="ORF">APECO1_3260</name>
</gene>
<protein>
    <recommendedName>
        <fullName evidence="1">Ribosome maturation factor RimP</fullName>
    </recommendedName>
</protein>
<sequence>MGLSTLEQKLTEMITAPVEALGFELVGIEFIRGRTSTLRIYIDSEDGINVDDCADVSHQVSAVLDVEDPITVAYNLEVSSPGLDRPLFTAEHYARFVGEEVTLVLRMAVQNRRKWQGVIKAVDGEMITVTVEGKDEVFALSNIQKANLVPHF</sequence>
<keyword id="KW-0963">Cytoplasm</keyword>
<keyword id="KW-1185">Reference proteome</keyword>
<keyword id="KW-0690">Ribosome biogenesis</keyword>
<reference key="1">
    <citation type="journal article" date="2007" name="J. Bacteriol.">
        <title>The genome sequence of avian pathogenic Escherichia coli strain O1:K1:H7 shares strong similarities with human extraintestinal pathogenic E. coli genomes.</title>
        <authorList>
            <person name="Johnson T.J."/>
            <person name="Kariyawasam S."/>
            <person name="Wannemuehler Y."/>
            <person name="Mangiamele P."/>
            <person name="Johnson S.J."/>
            <person name="Doetkott C."/>
            <person name="Skyberg J.A."/>
            <person name="Lynne A.M."/>
            <person name="Johnson J.R."/>
            <person name="Nolan L.K."/>
        </authorList>
    </citation>
    <scope>NUCLEOTIDE SEQUENCE [LARGE SCALE GENOMIC DNA]</scope>
</reference>
<name>RIMP_ECOK1</name>
<evidence type="ECO:0000255" key="1">
    <source>
        <dbReference type="HAMAP-Rule" id="MF_01077"/>
    </source>
</evidence>
<feature type="chain" id="PRO_1000064711" description="Ribosome maturation factor RimP">
    <location>
        <begin position="1"/>
        <end position="152"/>
    </location>
</feature>